<gene>
    <name evidence="1" type="primary">rpsM</name>
    <name type="ordered locus">HH_1400</name>
</gene>
<organism>
    <name type="scientific">Helicobacter hepaticus (strain ATCC 51449 / 3B1)</name>
    <dbReference type="NCBI Taxonomy" id="235279"/>
    <lineage>
        <taxon>Bacteria</taxon>
        <taxon>Pseudomonadati</taxon>
        <taxon>Campylobacterota</taxon>
        <taxon>Epsilonproteobacteria</taxon>
        <taxon>Campylobacterales</taxon>
        <taxon>Helicobacteraceae</taxon>
        <taxon>Helicobacter</taxon>
    </lineage>
</organism>
<comment type="function">
    <text evidence="1">Located at the top of the head of the 30S subunit, it contacts several helices of the 16S rRNA. In the 70S ribosome it contacts the 23S rRNA (bridge B1a) and protein L5 of the 50S subunit (bridge B1b), connecting the 2 subunits; these bridges are implicated in subunit movement. Contacts the tRNAs in the A and P-sites.</text>
</comment>
<comment type="subunit">
    <text evidence="1">Part of the 30S ribosomal subunit. Forms a loose heterodimer with protein S19. Forms two bridges to the 50S subunit in the 70S ribosome.</text>
</comment>
<comment type="similarity">
    <text evidence="1">Belongs to the universal ribosomal protein uS13 family.</text>
</comment>
<name>RS13_HELHP</name>
<sequence length="120" mass="13490">MARIAGVDLPKKKRVEYALTYIYGIGLKSSQDILKAVNISFDKRVSDLSEDEVSSIAKKIQESYMVEGDLRKKVTMDIKSLMDLGSYRGLRHRKGLPVRGQTTKNNARTRKGKKKTVGSK</sequence>
<accession>Q7VGC2</accession>
<protein>
    <recommendedName>
        <fullName evidence="1">Small ribosomal subunit protein uS13</fullName>
    </recommendedName>
    <alternativeName>
        <fullName evidence="3">30S ribosomal protein S13</fullName>
    </alternativeName>
</protein>
<proteinExistence type="inferred from homology"/>
<feature type="chain" id="PRO_0000230514" description="Small ribosomal subunit protein uS13">
    <location>
        <begin position="1"/>
        <end position="120"/>
    </location>
</feature>
<feature type="region of interest" description="Disordered" evidence="2">
    <location>
        <begin position="92"/>
        <end position="120"/>
    </location>
</feature>
<feature type="compositionally biased region" description="Basic residues" evidence="2">
    <location>
        <begin position="107"/>
        <end position="120"/>
    </location>
</feature>
<keyword id="KW-1185">Reference proteome</keyword>
<keyword id="KW-0687">Ribonucleoprotein</keyword>
<keyword id="KW-0689">Ribosomal protein</keyword>
<keyword id="KW-0694">RNA-binding</keyword>
<keyword id="KW-0699">rRNA-binding</keyword>
<keyword id="KW-0820">tRNA-binding</keyword>
<dbReference type="EMBL" id="AE017125">
    <property type="protein sequence ID" value="AAP77997.1"/>
    <property type="molecule type" value="Genomic_DNA"/>
</dbReference>
<dbReference type="RefSeq" id="WP_011116240.1">
    <property type="nucleotide sequence ID" value="NC_004917.1"/>
</dbReference>
<dbReference type="SMR" id="Q7VGC2"/>
<dbReference type="STRING" id="235279.HH_1400"/>
<dbReference type="KEGG" id="hhe:HH_1400"/>
<dbReference type="eggNOG" id="COG0099">
    <property type="taxonomic scope" value="Bacteria"/>
</dbReference>
<dbReference type="HOGENOM" id="CLU_103849_1_2_7"/>
<dbReference type="OrthoDB" id="9803610at2"/>
<dbReference type="Proteomes" id="UP000002495">
    <property type="component" value="Chromosome"/>
</dbReference>
<dbReference type="GO" id="GO:0005829">
    <property type="term" value="C:cytosol"/>
    <property type="evidence" value="ECO:0007669"/>
    <property type="project" value="TreeGrafter"/>
</dbReference>
<dbReference type="GO" id="GO:0015935">
    <property type="term" value="C:small ribosomal subunit"/>
    <property type="evidence" value="ECO:0007669"/>
    <property type="project" value="TreeGrafter"/>
</dbReference>
<dbReference type="GO" id="GO:0019843">
    <property type="term" value="F:rRNA binding"/>
    <property type="evidence" value="ECO:0007669"/>
    <property type="project" value="UniProtKB-UniRule"/>
</dbReference>
<dbReference type="GO" id="GO:0003735">
    <property type="term" value="F:structural constituent of ribosome"/>
    <property type="evidence" value="ECO:0007669"/>
    <property type="project" value="InterPro"/>
</dbReference>
<dbReference type="GO" id="GO:0000049">
    <property type="term" value="F:tRNA binding"/>
    <property type="evidence" value="ECO:0007669"/>
    <property type="project" value="UniProtKB-UniRule"/>
</dbReference>
<dbReference type="GO" id="GO:0006412">
    <property type="term" value="P:translation"/>
    <property type="evidence" value="ECO:0007669"/>
    <property type="project" value="UniProtKB-UniRule"/>
</dbReference>
<dbReference type="FunFam" id="1.10.8.50:FF:000001">
    <property type="entry name" value="30S ribosomal protein S13"/>
    <property type="match status" value="1"/>
</dbReference>
<dbReference type="FunFam" id="4.10.910.10:FF:000001">
    <property type="entry name" value="30S ribosomal protein S13"/>
    <property type="match status" value="1"/>
</dbReference>
<dbReference type="Gene3D" id="1.10.8.50">
    <property type="match status" value="1"/>
</dbReference>
<dbReference type="Gene3D" id="4.10.910.10">
    <property type="entry name" value="30s ribosomal protein s13, domain 2"/>
    <property type="match status" value="1"/>
</dbReference>
<dbReference type="HAMAP" id="MF_01315">
    <property type="entry name" value="Ribosomal_uS13"/>
    <property type="match status" value="1"/>
</dbReference>
<dbReference type="InterPro" id="IPR027437">
    <property type="entry name" value="Rbsml_uS13_C"/>
</dbReference>
<dbReference type="InterPro" id="IPR001892">
    <property type="entry name" value="Ribosomal_uS13"/>
</dbReference>
<dbReference type="InterPro" id="IPR010979">
    <property type="entry name" value="Ribosomal_uS13-like_H2TH"/>
</dbReference>
<dbReference type="InterPro" id="IPR019980">
    <property type="entry name" value="Ribosomal_uS13_bac-type"/>
</dbReference>
<dbReference type="InterPro" id="IPR018269">
    <property type="entry name" value="Ribosomal_uS13_CS"/>
</dbReference>
<dbReference type="NCBIfam" id="TIGR03631">
    <property type="entry name" value="uS13_bact"/>
    <property type="match status" value="1"/>
</dbReference>
<dbReference type="PANTHER" id="PTHR10871">
    <property type="entry name" value="30S RIBOSOMAL PROTEIN S13/40S RIBOSOMAL PROTEIN S18"/>
    <property type="match status" value="1"/>
</dbReference>
<dbReference type="PANTHER" id="PTHR10871:SF1">
    <property type="entry name" value="SMALL RIBOSOMAL SUBUNIT PROTEIN US13M"/>
    <property type="match status" value="1"/>
</dbReference>
<dbReference type="Pfam" id="PF00416">
    <property type="entry name" value="Ribosomal_S13"/>
    <property type="match status" value="1"/>
</dbReference>
<dbReference type="PIRSF" id="PIRSF002134">
    <property type="entry name" value="Ribosomal_S13"/>
    <property type="match status" value="1"/>
</dbReference>
<dbReference type="SUPFAM" id="SSF46946">
    <property type="entry name" value="S13-like H2TH domain"/>
    <property type="match status" value="1"/>
</dbReference>
<dbReference type="PROSITE" id="PS00646">
    <property type="entry name" value="RIBOSOMAL_S13_1"/>
    <property type="match status" value="1"/>
</dbReference>
<dbReference type="PROSITE" id="PS50159">
    <property type="entry name" value="RIBOSOMAL_S13_2"/>
    <property type="match status" value="1"/>
</dbReference>
<reference key="1">
    <citation type="journal article" date="2003" name="Proc. Natl. Acad. Sci. U.S.A.">
        <title>The complete genome sequence of the carcinogenic bacterium Helicobacter hepaticus.</title>
        <authorList>
            <person name="Suerbaum S."/>
            <person name="Josenhans C."/>
            <person name="Sterzenbach T."/>
            <person name="Drescher B."/>
            <person name="Brandt P."/>
            <person name="Bell M."/>
            <person name="Droege M."/>
            <person name="Fartmann B."/>
            <person name="Fischer H.-P."/>
            <person name="Ge Z."/>
            <person name="Hoerster A."/>
            <person name="Holland R."/>
            <person name="Klein K."/>
            <person name="Koenig J."/>
            <person name="Macko L."/>
            <person name="Mendz G.L."/>
            <person name="Nyakatura G."/>
            <person name="Schauer D.B."/>
            <person name="Shen Z."/>
            <person name="Weber J."/>
            <person name="Frosch M."/>
            <person name="Fox J.G."/>
        </authorList>
    </citation>
    <scope>NUCLEOTIDE SEQUENCE [LARGE SCALE GENOMIC DNA]</scope>
    <source>
        <strain>ATCC 51449 / 3B1</strain>
    </source>
</reference>
<evidence type="ECO:0000255" key="1">
    <source>
        <dbReference type="HAMAP-Rule" id="MF_01315"/>
    </source>
</evidence>
<evidence type="ECO:0000256" key="2">
    <source>
        <dbReference type="SAM" id="MobiDB-lite"/>
    </source>
</evidence>
<evidence type="ECO:0000305" key="3"/>